<keyword id="KW-1185">Reference proteome</keyword>
<keyword id="KW-0833">Ubl conjugation pathway</keyword>
<accession>A9UR29</accession>
<proteinExistence type="inferred from homology"/>
<evidence type="ECO:0000250" key="1"/>
<evidence type="ECO:0000305" key="2"/>
<comment type="function">
    <text evidence="1">E2-like enzyme which forms an intermediate with UFM1 via a thioester linkage.</text>
</comment>
<comment type="similarity">
    <text evidence="2">Belongs to the ubiquitin-conjugating enzyme family. UFC1 subfamily.</text>
</comment>
<reference key="1">
    <citation type="journal article" date="2008" name="Nature">
        <title>The genome of the choanoflagellate Monosiga brevicollis and the origin of metazoans.</title>
        <authorList>
            <consortium name="JGI Sequencing"/>
            <person name="King N."/>
            <person name="Westbrook M.J."/>
            <person name="Young S.L."/>
            <person name="Kuo A."/>
            <person name="Abedin M."/>
            <person name="Chapman J."/>
            <person name="Fairclough S."/>
            <person name="Hellsten U."/>
            <person name="Isogai Y."/>
            <person name="Letunic I."/>
            <person name="Marr M."/>
            <person name="Pincus D."/>
            <person name="Putnam N."/>
            <person name="Rokas A."/>
            <person name="Wright K.J."/>
            <person name="Zuzow R."/>
            <person name="Dirks W."/>
            <person name="Good M."/>
            <person name="Goodstein D."/>
            <person name="Lemons D."/>
            <person name="Li W."/>
            <person name="Lyons J.B."/>
            <person name="Morris A."/>
            <person name="Nichols S."/>
            <person name="Richter D.J."/>
            <person name="Salamov A."/>
            <person name="Bork P."/>
            <person name="Lim W.A."/>
            <person name="Manning G."/>
            <person name="Miller W.T."/>
            <person name="McGinnis W."/>
            <person name="Shapiro H."/>
            <person name="Tjian R."/>
            <person name="Grigoriev I.V."/>
            <person name="Rokhsar D."/>
        </authorList>
    </citation>
    <scope>NUCLEOTIDE SEQUENCE [LARGE SCALE GENOMIC DNA]</scope>
    <source>
        <strain>MX1 / ATCC 50154</strain>
    </source>
</reference>
<gene>
    <name type="ORF">21173</name>
</gene>
<organism>
    <name type="scientific">Monosiga brevicollis</name>
    <name type="common">Choanoflagellate</name>
    <dbReference type="NCBI Taxonomy" id="81824"/>
    <lineage>
        <taxon>Eukaryota</taxon>
        <taxon>Choanoflagellata</taxon>
        <taxon>Craspedida</taxon>
        <taxon>Salpingoecidae</taxon>
        <taxon>Monosiga</taxon>
    </lineage>
</organism>
<name>UFC1_MONBE</name>
<sequence length="166" mass="18841">MVDAHTRKTLAAIPLLRVNAGPRSGDLWRARHKEELMSLITYVKNNKENDNDWFRLESNPEGTRWFGKCWIVVDMLKYEFDLEFDIPVAYPSTAPEIAIPELDGKTAKMYRGGKICLTDHFKPLWARNVPHFGIAHAMALGLGPWLAVEIPDLVSKGIVKHKETSS</sequence>
<feature type="chain" id="PRO_0000391979" description="Ubiquitin-fold modifier-conjugating enzyme 1">
    <location>
        <begin position="1"/>
        <end position="166"/>
    </location>
</feature>
<feature type="active site" description="Glycyl thioester intermediate" evidence="1">
    <location>
        <position position="116"/>
    </location>
</feature>
<dbReference type="EMBL" id="CH991544">
    <property type="protein sequence ID" value="EDQ91847.1"/>
    <property type="molecule type" value="Genomic_DNA"/>
</dbReference>
<dbReference type="RefSeq" id="XP_001743133.1">
    <property type="nucleotide sequence ID" value="XM_001743081.1"/>
</dbReference>
<dbReference type="SMR" id="A9UR29"/>
<dbReference type="FunCoup" id="A9UR29">
    <property type="interactions" value="335"/>
</dbReference>
<dbReference type="STRING" id="81824.A9UR29"/>
<dbReference type="EnsemblProtists" id="EDQ91847">
    <property type="protein sequence ID" value="EDQ91847"/>
    <property type="gene ID" value="MONBRDRAFT_21173"/>
</dbReference>
<dbReference type="KEGG" id="mbr:MONBRDRAFT_21173"/>
<dbReference type="eggNOG" id="KOG3357">
    <property type="taxonomic scope" value="Eukaryota"/>
</dbReference>
<dbReference type="InParanoid" id="A9UR29"/>
<dbReference type="OMA" id="LWQKNVP"/>
<dbReference type="Proteomes" id="UP000001357">
    <property type="component" value="Unassembled WGS sequence"/>
</dbReference>
<dbReference type="GO" id="GO:0061657">
    <property type="term" value="F:UFM1 conjugating enzyme activity"/>
    <property type="evidence" value="ECO:0007669"/>
    <property type="project" value="InterPro"/>
</dbReference>
<dbReference type="GO" id="GO:0071568">
    <property type="term" value="F:UFM1 transferase activity"/>
    <property type="evidence" value="ECO:0000318"/>
    <property type="project" value="GO_Central"/>
</dbReference>
<dbReference type="GO" id="GO:0071569">
    <property type="term" value="P:protein ufmylation"/>
    <property type="evidence" value="ECO:0007669"/>
    <property type="project" value="InterPro"/>
</dbReference>
<dbReference type="GO" id="GO:0034976">
    <property type="term" value="P:response to endoplasmic reticulum stress"/>
    <property type="evidence" value="ECO:0000318"/>
    <property type="project" value="GO_Central"/>
</dbReference>
<dbReference type="GO" id="GO:0061709">
    <property type="term" value="P:reticulophagy"/>
    <property type="evidence" value="ECO:0000318"/>
    <property type="project" value="GO_Central"/>
</dbReference>
<dbReference type="CDD" id="cd11686">
    <property type="entry name" value="UBCc_UFC1"/>
    <property type="match status" value="1"/>
</dbReference>
<dbReference type="FunFam" id="3.10.110.10:FF:000042">
    <property type="entry name" value="Ubiquitin-fold modifier-conjugating enzyme 1"/>
    <property type="match status" value="1"/>
</dbReference>
<dbReference type="Gene3D" id="3.10.110.10">
    <property type="entry name" value="Ubiquitin Conjugating Enzyme"/>
    <property type="match status" value="1"/>
</dbReference>
<dbReference type="InterPro" id="IPR016135">
    <property type="entry name" value="UBQ-conjugating_enzyme/RWD"/>
</dbReference>
<dbReference type="InterPro" id="IPR014806">
    <property type="entry name" value="Ufc1"/>
</dbReference>
<dbReference type="PANTHER" id="PTHR12921">
    <property type="entry name" value="UBIQUITIN-FOLD MODIFIER-CONJUGATING ENZYME 1"/>
    <property type="match status" value="1"/>
</dbReference>
<dbReference type="PANTHER" id="PTHR12921:SF0">
    <property type="entry name" value="UBIQUITIN-FOLD MODIFIER-CONJUGATING ENZYME 1"/>
    <property type="match status" value="1"/>
</dbReference>
<dbReference type="Pfam" id="PF08694">
    <property type="entry name" value="UFC1"/>
    <property type="match status" value="1"/>
</dbReference>
<dbReference type="PIRSF" id="PIRSF008716">
    <property type="entry name" value="DUF1782"/>
    <property type="match status" value="1"/>
</dbReference>
<dbReference type="SUPFAM" id="SSF54495">
    <property type="entry name" value="UBC-like"/>
    <property type="match status" value="1"/>
</dbReference>
<protein>
    <recommendedName>
        <fullName>Ubiquitin-fold modifier-conjugating enzyme 1</fullName>
    </recommendedName>
    <alternativeName>
        <fullName>Ufm1-conjugating enzyme 1</fullName>
    </alternativeName>
</protein>